<feature type="chain" id="PRO_1000099720" description="3-phosphoshikimate 1-carboxyvinyltransferase">
    <location>
        <begin position="1"/>
        <end position="453"/>
    </location>
</feature>
<feature type="region of interest" description="Disordered" evidence="2">
    <location>
        <begin position="1"/>
        <end position="25"/>
    </location>
</feature>
<feature type="active site" description="Proton acceptor" evidence="1">
    <location>
        <position position="330"/>
    </location>
</feature>
<feature type="binding site" evidence="1">
    <location>
        <position position="28"/>
    </location>
    <ligand>
        <name>3-phosphoshikimate</name>
        <dbReference type="ChEBI" id="CHEBI:145989"/>
    </ligand>
</feature>
<feature type="binding site" evidence="1">
    <location>
        <position position="28"/>
    </location>
    <ligand>
        <name>phosphoenolpyruvate</name>
        <dbReference type="ChEBI" id="CHEBI:58702"/>
    </ligand>
</feature>
<feature type="binding site" evidence="1">
    <location>
        <position position="29"/>
    </location>
    <ligand>
        <name>3-phosphoshikimate</name>
        <dbReference type="ChEBI" id="CHEBI:145989"/>
    </ligand>
</feature>
<feature type="binding site" evidence="1">
    <location>
        <position position="33"/>
    </location>
    <ligand>
        <name>3-phosphoshikimate</name>
        <dbReference type="ChEBI" id="CHEBI:145989"/>
    </ligand>
</feature>
<feature type="binding site" evidence="1">
    <location>
        <position position="101"/>
    </location>
    <ligand>
        <name>phosphoenolpyruvate</name>
        <dbReference type="ChEBI" id="CHEBI:58702"/>
    </ligand>
</feature>
<feature type="binding site" evidence="1">
    <location>
        <position position="129"/>
    </location>
    <ligand>
        <name>phosphoenolpyruvate</name>
        <dbReference type="ChEBI" id="CHEBI:58702"/>
    </ligand>
</feature>
<feature type="binding site" evidence="1">
    <location>
        <position position="175"/>
    </location>
    <ligand>
        <name>3-phosphoshikimate</name>
        <dbReference type="ChEBI" id="CHEBI:145989"/>
    </ligand>
</feature>
<feature type="binding site" evidence="1">
    <location>
        <position position="177"/>
    </location>
    <ligand>
        <name>3-phosphoshikimate</name>
        <dbReference type="ChEBI" id="CHEBI:145989"/>
    </ligand>
</feature>
<feature type="binding site" evidence="1">
    <location>
        <position position="177"/>
    </location>
    <ligand>
        <name>phosphoenolpyruvate</name>
        <dbReference type="ChEBI" id="CHEBI:58702"/>
    </ligand>
</feature>
<feature type="binding site" evidence="1">
    <location>
        <position position="330"/>
    </location>
    <ligand>
        <name>3-phosphoshikimate</name>
        <dbReference type="ChEBI" id="CHEBI:145989"/>
    </ligand>
</feature>
<feature type="binding site" evidence="1">
    <location>
        <position position="357"/>
    </location>
    <ligand>
        <name>3-phosphoshikimate</name>
        <dbReference type="ChEBI" id="CHEBI:145989"/>
    </ligand>
</feature>
<feature type="binding site" evidence="1">
    <location>
        <position position="361"/>
    </location>
    <ligand>
        <name>phosphoenolpyruvate</name>
        <dbReference type="ChEBI" id="CHEBI:58702"/>
    </ligand>
</feature>
<feature type="binding site" evidence="1">
    <location>
        <position position="405"/>
    </location>
    <ligand>
        <name>phosphoenolpyruvate</name>
        <dbReference type="ChEBI" id="CHEBI:58702"/>
    </ligand>
</feature>
<gene>
    <name evidence="1" type="primary">aroA</name>
    <name type="ordered locus">Mpop_2085</name>
</gene>
<evidence type="ECO:0000255" key="1">
    <source>
        <dbReference type="HAMAP-Rule" id="MF_00210"/>
    </source>
</evidence>
<evidence type="ECO:0000256" key="2">
    <source>
        <dbReference type="SAM" id="MobiDB-lite"/>
    </source>
</evidence>
<name>AROA_METPB</name>
<keyword id="KW-0028">Amino-acid biosynthesis</keyword>
<keyword id="KW-0057">Aromatic amino acid biosynthesis</keyword>
<keyword id="KW-0963">Cytoplasm</keyword>
<keyword id="KW-0808">Transferase</keyword>
<sequence length="453" mass="46991">MSHDSEPQPVTAHPAGPLTGALKPPGDKSISHRAMIFGLLSVGETRVEGLLEGDDVLRTAAAVKALGAQVTREGEGRWRIVGVGIGGMQDPVGVLDFGNAGTGSRLMMGVVGGQPVTATFDGDASLRKRPMRRILDPILKMGAEVVSEAEGGRVPLTLRGPREAIPIRYELPVASAQIKSAVLLAGLNAPGTTTVIEKAASRDHTERMLRLFGADVSVTPSGEGGHGRTVTLTGQPTLRGTDVIVPADPSSAAFPLVAALIVPGSEVILRGVMMNPLRTGLITTLIEMGADIERFDEREEGGETVADLRVRASRLRGVDVPAERAPSMIDEYPILAVAAAFAEGTTRMNGLHELRVKESDRLAAVAAGLAANGVGHDIEGDDLIVTGNGGPPAGGGTVATHLDHRIAMAFLVMGLATRKPVTVDDGAMIATSFPSFRPTMLALGARIEDGAAA</sequence>
<proteinExistence type="inferred from homology"/>
<organism>
    <name type="scientific">Methylorubrum populi (strain ATCC BAA-705 / NCIMB 13946 / BJ001)</name>
    <name type="common">Methylobacterium populi</name>
    <dbReference type="NCBI Taxonomy" id="441620"/>
    <lineage>
        <taxon>Bacteria</taxon>
        <taxon>Pseudomonadati</taxon>
        <taxon>Pseudomonadota</taxon>
        <taxon>Alphaproteobacteria</taxon>
        <taxon>Hyphomicrobiales</taxon>
        <taxon>Methylobacteriaceae</taxon>
        <taxon>Methylorubrum</taxon>
    </lineage>
</organism>
<accession>B1ZLG6</accession>
<comment type="function">
    <text evidence="1">Catalyzes the transfer of the enolpyruvyl moiety of phosphoenolpyruvate (PEP) to the 5-hydroxyl of shikimate-3-phosphate (S3P) to produce enolpyruvyl shikimate-3-phosphate and inorganic phosphate.</text>
</comment>
<comment type="catalytic activity">
    <reaction evidence="1">
        <text>3-phosphoshikimate + phosphoenolpyruvate = 5-O-(1-carboxyvinyl)-3-phosphoshikimate + phosphate</text>
        <dbReference type="Rhea" id="RHEA:21256"/>
        <dbReference type="ChEBI" id="CHEBI:43474"/>
        <dbReference type="ChEBI" id="CHEBI:57701"/>
        <dbReference type="ChEBI" id="CHEBI:58702"/>
        <dbReference type="ChEBI" id="CHEBI:145989"/>
        <dbReference type="EC" id="2.5.1.19"/>
    </reaction>
    <physiologicalReaction direction="left-to-right" evidence="1">
        <dbReference type="Rhea" id="RHEA:21257"/>
    </physiologicalReaction>
</comment>
<comment type="pathway">
    <text evidence="1">Metabolic intermediate biosynthesis; chorismate biosynthesis; chorismate from D-erythrose 4-phosphate and phosphoenolpyruvate: step 6/7.</text>
</comment>
<comment type="subunit">
    <text evidence="1">Monomer.</text>
</comment>
<comment type="subcellular location">
    <subcellularLocation>
        <location evidence="1">Cytoplasm</location>
    </subcellularLocation>
</comment>
<comment type="similarity">
    <text evidence="1">Belongs to the EPSP synthase family.</text>
</comment>
<protein>
    <recommendedName>
        <fullName evidence="1">3-phosphoshikimate 1-carboxyvinyltransferase</fullName>
        <ecNumber evidence="1">2.5.1.19</ecNumber>
    </recommendedName>
    <alternativeName>
        <fullName evidence="1">5-enolpyruvylshikimate-3-phosphate synthase</fullName>
        <shortName evidence="1">EPSP synthase</shortName>
        <shortName evidence="1">EPSPS</shortName>
    </alternativeName>
</protein>
<dbReference type="EC" id="2.5.1.19" evidence="1"/>
<dbReference type="EMBL" id="CP001029">
    <property type="protein sequence ID" value="ACB80247.1"/>
    <property type="molecule type" value="Genomic_DNA"/>
</dbReference>
<dbReference type="RefSeq" id="WP_012453990.1">
    <property type="nucleotide sequence ID" value="NC_010725.1"/>
</dbReference>
<dbReference type="SMR" id="B1ZLG6"/>
<dbReference type="STRING" id="441620.Mpop_2085"/>
<dbReference type="KEGG" id="mpo:Mpop_2085"/>
<dbReference type="eggNOG" id="COG0128">
    <property type="taxonomic scope" value="Bacteria"/>
</dbReference>
<dbReference type="HOGENOM" id="CLU_024321_0_1_5"/>
<dbReference type="OrthoDB" id="9809920at2"/>
<dbReference type="UniPathway" id="UPA00053">
    <property type="reaction ID" value="UER00089"/>
</dbReference>
<dbReference type="Proteomes" id="UP000007136">
    <property type="component" value="Chromosome"/>
</dbReference>
<dbReference type="GO" id="GO:0005737">
    <property type="term" value="C:cytoplasm"/>
    <property type="evidence" value="ECO:0007669"/>
    <property type="project" value="UniProtKB-SubCell"/>
</dbReference>
<dbReference type="GO" id="GO:0003866">
    <property type="term" value="F:3-phosphoshikimate 1-carboxyvinyltransferase activity"/>
    <property type="evidence" value="ECO:0007669"/>
    <property type="project" value="UniProtKB-UniRule"/>
</dbReference>
<dbReference type="GO" id="GO:0008652">
    <property type="term" value="P:amino acid biosynthetic process"/>
    <property type="evidence" value="ECO:0007669"/>
    <property type="project" value="UniProtKB-KW"/>
</dbReference>
<dbReference type="GO" id="GO:0009073">
    <property type="term" value="P:aromatic amino acid family biosynthetic process"/>
    <property type="evidence" value="ECO:0007669"/>
    <property type="project" value="UniProtKB-KW"/>
</dbReference>
<dbReference type="GO" id="GO:0009423">
    <property type="term" value="P:chorismate biosynthetic process"/>
    <property type="evidence" value="ECO:0007669"/>
    <property type="project" value="UniProtKB-UniRule"/>
</dbReference>
<dbReference type="CDD" id="cd01556">
    <property type="entry name" value="EPSP_synthase"/>
    <property type="match status" value="1"/>
</dbReference>
<dbReference type="FunFam" id="3.65.10.10:FF:000005">
    <property type="entry name" value="3-phosphoshikimate 1-carboxyvinyltransferase"/>
    <property type="match status" value="1"/>
</dbReference>
<dbReference type="Gene3D" id="3.65.10.10">
    <property type="entry name" value="Enolpyruvate transferase domain"/>
    <property type="match status" value="2"/>
</dbReference>
<dbReference type="HAMAP" id="MF_00210">
    <property type="entry name" value="EPSP_synth"/>
    <property type="match status" value="1"/>
</dbReference>
<dbReference type="InterPro" id="IPR001986">
    <property type="entry name" value="Enolpyruvate_Tfrase_dom"/>
</dbReference>
<dbReference type="InterPro" id="IPR036968">
    <property type="entry name" value="Enolpyruvate_Tfrase_sf"/>
</dbReference>
<dbReference type="InterPro" id="IPR006264">
    <property type="entry name" value="EPSP_synthase"/>
</dbReference>
<dbReference type="InterPro" id="IPR023193">
    <property type="entry name" value="EPSP_synthase_CS"/>
</dbReference>
<dbReference type="InterPro" id="IPR013792">
    <property type="entry name" value="RNA3'P_cycl/enolpyr_Trfase_a/b"/>
</dbReference>
<dbReference type="NCBIfam" id="TIGR01356">
    <property type="entry name" value="aroA"/>
    <property type="match status" value="1"/>
</dbReference>
<dbReference type="PANTHER" id="PTHR21090">
    <property type="entry name" value="AROM/DEHYDROQUINATE SYNTHASE"/>
    <property type="match status" value="1"/>
</dbReference>
<dbReference type="PANTHER" id="PTHR21090:SF5">
    <property type="entry name" value="PENTAFUNCTIONAL AROM POLYPEPTIDE"/>
    <property type="match status" value="1"/>
</dbReference>
<dbReference type="Pfam" id="PF00275">
    <property type="entry name" value="EPSP_synthase"/>
    <property type="match status" value="1"/>
</dbReference>
<dbReference type="PIRSF" id="PIRSF000505">
    <property type="entry name" value="EPSPS"/>
    <property type="match status" value="1"/>
</dbReference>
<dbReference type="SUPFAM" id="SSF55205">
    <property type="entry name" value="EPT/RTPC-like"/>
    <property type="match status" value="1"/>
</dbReference>
<dbReference type="PROSITE" id="PS00104">
    <property type="entry name" value="EPSP_SYNTHASE_1"/>
    <property type="match status" value="1"/>
</dbReference>
<dbReference type="PROSITE" id="PS00885">
    <property type="entry name" value="EPSP_SYNTHASE_2"/>
    <property type="match status" value="1"/>
</dbReference>
<reference key="1">
    <citation type="submission" date="2008-04" db="EMBL/GenBank/DDBJ databases">
        <title>Complete sequence of chromosome of Methylobacterium populi BJ001.</title>
        <authorList>
            <consortium name="US DOE Joint Genome Institute"/>
            <person name="Copeland A."/>
            <person name="Lucas S."/>
            <person name="Lapidus A."/>
            <person name="Glavina del Rio T."/>
            <person name="Dalin E."/>
            <person name="Tice H."/>
            <person name="Bruce D."/>
            <person name="Goodwin L."/>
            <person name="Pitluck S."/>
            <person name="Chertkov O."/>
            <person name="Brettin T."/>
            <person name="Detter J.C."/>
            <person name="Han C."/>
            <person name="Kuske C.R."/>
            <person name="Schmutz J."/>
            <person name="Larimer F."/>
            <person name="Land M."/>
            <person name="Hauser L."/>
            <person name="Kyrpides N."/>
            <person name="Mikhailova N."/>
            <person name="Marx C."/>
            <person name="Richardson P."/>
        </authorList>
    </citation>
    <scope>NUCLEOTIDE SEQUENCE [LARGE SCALE GENOMIC DNA]</scope>
    <source>
        <strain>ATCC BAA-705 / NCIMB 13946 / BJ001</strain>
    </source>
</reference>